<keyword id="KW-0028">Amino-acid biosynthesis</keyword>
<keyword id="KW-0057">Aromatic amino acid biosynthesis</keyword>
<keyword id="KW-0210">Decarboxylase</keyword>
<keyword id="KW-0456">Lyase</keyword>
<keyword id="KW-1185">Reference proteome</keyword>
<keyword id="KW-0822">Tryptophan biosynthesis</keyword>
<protein>
    <recommendedName>
        <fullName evidence="1">Indole-3-glycerol phosphate synthase</fullName>
        <shortName evidence="1">IGPS</shortName>
        <ecNumber evidence="1">4.1.1.48</ecNumber>
    </recommendedName>
</protein>
<sequence>MNDILAKILAVKAEEVATARQMRSEAELLREAQARQDVRGFAQAIEDKIAQGKPGVIAEIKKASPSKGVLRENFDASEIAASYAAHGAACLSVLTDVQFFQGSHDNLRRARAACPLPVLRKDFILDPYQIISARAMGADCVLLIVAALSPTQLRDLEAVAMDLGMDVLVEVHDEAELDVALGMKTPLLGINNRNLRSFETRLETTLNLLPRIPAGKRVVTESGILQPDDVQLMRRHGVQAFLVGEAFMRAEEPGAELARLVA</sequence>
<organism>
    <name type="scientific">Bordetella avium (strain 197N)</name>
    <dbReference type="NCBI Taxonomy" id="360910"/>
    <lineage>
        <taxon>Bacteria</taxon>
        <taxon>Pseudomonadati</taxon>
        <taxon>Pseudomonadota</taxon>
        <taxon>Betaproteobacteria</taxon>
        <taxon>Burkholderiales</taxon>
        <taxon>Alcaligenaceae</taxon>
        <taxon>Bordetella</taxon>
    </lineage>
</organism>
<gene>
    <name evidence="1" type="primary">trpC</name>
    <name type="ordered locus">BAV3152</name>
</gene>
<feature type="chain" id="PRO_1000018442" description="Indole-3-glycerol phosphate synthase">
    <location>
        <begin position="1"/>
        <end position="262"/>
    </location>
</feature>
<comment type="catalytic activity">
    <reaction evidence="1">
        <text>1-(2-carboxyphenylamino)-1-deoxy-D-ribulose 5-phosphate + H(+) = (1S,2R)-1-C-(indol-3-yl)glycerol 3-phosphate + CO2 + H2O</text>
        <dbReference type="Rhea" id="RHEA:23476"/>
        <dbReference type="ChEBI" id="CHEBI:15377"/>
        <dbReference type="ChEBI" id="CHEBI:15378"/>
        <dbReference type="ChEBI" id="CHEBI:16526"/>
        <dbReference type="ChEBI" id="CHEBI:58613"/>
        <dbReference type="ChEBI" id="CHEBI:58866"/>
        <dbReference type="EC" id="4.1.1.48"/>
    </reaction>
</comment>
<comment type="pathway">
    <text evidence="1">Amino-acid biosynthesis; L-tryptophan biosynthesis; L-tryptophan from chorismate: step 4/5.</text>
</comment>
<comment type="similarity">
    <text evidence="1">Belongs to the TrpC family.</text>
</comment>
<name>TRPC_BORA1</name>
<proteinExistence type="inferred from homology"/>
<evidence type="ECO:0000255" key="1">
    <source>
        <dbReference type="HAMAP-Rule" id="MF_00134"/>
    </source>
</evidence>
<dbReference type="EC" id="4.1.1.48" evidence="1"/>
<dbReference type="EMBL" id="AM167904">
    <property type="protein sequence ID" value="CAJ50761.1"/>
    <property type="molecule type" value="Genomic_DNA"/>
</dbReference>
<dbReference type="RefSeq" id="WP_012418789.1">
    <property type="nucleotide sequence ID" value="NC_010645.1"/>
</dbReference>
<dbReference type="SMR" id="Q2KU99"/>
<dbReference type="STRING" id="360910.BAV3152"/>
<dbReference type="GeneID" id="92933591"/>
<dbReference type="KEGG" id="bav:BAV3152"/>
<dbReference type="eggNOG" id="COG0134">
    <property type="taxonomic scope" value="Bacteria"/>
</dbReference>
<dbReference type="HOGENOM" id="CLU_034247_2_0_4"/>
<dbReference type="OrthoDB" id="9804217at2"/>
<dbReference type="UniPathway" id="UPA00035">
    <property type="reaction ID" value="UER00043"/>
</dbReference>
<dbReference type="Proteomes" id="UP000001977">
    <property type="component" value="Chromosome"/>
</dbReference>
<dbReference type="GO" id="GO:0004425">
    <property type="term" value="F:indole-3-glycerol-phosphate synthase activity"/>
    <property type="evidence" value="ECO:0007669"/>
    <property type="project" value="UniProtKB-UniRule"/>
</dbReference>
<dbReference type="GO" id="GO:0004640">
    <property type="term" value="F:phosphoribosylanthranilate isomerase activity"/>
    <property type="evidence" value="ECO:0007669"/>
    <property type="project" value="TreeGrafter"/>
</dbReference>
<dbReference type="GO" id="GO:0000162">
    <property type="term" value="P:L-tryptophan biosynthetic process"/>
    <property type="evidence" value="ECO:0007669"/>
    <property type="project" value="UniProtKB-UniRule"/>
</dbReference>
<dbReference type="CDD" id="cd00331">
    <property type="entry name" value="IGPS"/>
    <property type="match status" value="1"/>
</dbReference>
<dbReference type="FunFam" id="3.20.20.70:FF:000024">
    <property type="entry name" value="Indole-3-glycerol phosphate synthase"/>
    <property type="match status" value="1"/>
</dbReference>
<dbReference type="Gene3D" id="3.20.20.70">
    <property type="entry name" value="Aldolase class I"/>
    <property type="match status" value="1"/>
</dbReference>
<dbReference type="HAMAP" id="MF_00134_B">
    <property type="entry name" value="IGPS_B"/>
    <property type="match status" value="1"/>
</dbReference>
<dbReference type="InterPro" id="IPR013785">
    <property type="entry name" value="Aldolase_TIM"/>
</dbReference>
<dbReference type="InterPro" id="IPR045186">
    <property type="entry name" value="Indole-3-glycerol_P_synth"/>
</dbReference>
<dbReference type="InterPro" id="IPR013798">
    <property type="entry name" value="Indole-3-glycerol_P_synth_dom"/>
</dbReference>
<dbReference type="InterPro" id="IPR001468">
    <property type="entry name" value="Indole-3-GlycerolPSynthase_CS"/>
</dbReference>
<dbReference type="InterPro" id="IPR011060">
    <property type="entry name" value="RibuloseP-bd_barrel"/>
</dbReference>
<dbReference type="NCBIfam" id="NF001373">
    <property type="entry name" value="PRK00278.1-6"/>
    <property type="match status" value="1"/>
</dbReference>
<dbReference type="NCBIfam" id="NF001377">
    <property type="entry name" value="PRK00278.2-4"/>
    <property type="match status" value="1"/>
</dbReference>
<dbReference type="PANTHER" id="PTHR22854:SF2">
    <property type="entry name" value="INDOLE-3-GLYCEROL-PHOSPHATE SYNTHASE"/>
    <property type="match status" value="1"/>
</dbReference>
<dbReference type="PANTHER" id="PTHR22854">
    <property type="entry name" value="TRYPTOPHAN BIOSYNTHESIS PROTEIN"/>
    <property type="match status" value="1"/>
</dbReference>
<dbReference type="Pfam" id="PF00218">
    <property type="entry name" value="IGPS"/>
    <property type="match status" value="1"/>
</dbReference>
<dbReference type="SUPFAM" id="SSF51366">
    <property type="entry name" value="Ribulose-phoshate binding barrel"/>
    <property type="match status" value="1"/>
</dbReference>
<dbReference type="PROSITE" id="PS00614">
    <property type="entry name" value="IGPS"/>
    <property type="match status" value="1"/>
</dbReference>
<accession>Q2KU99</accession>
<reference key="1">
    <citation type="journal article" date="2006" name="J. Bacteriol.">
        <title>Comparison of the genome sequence of the poultry pathogen Bordetella avium with those of B. bronchiseptica, B. pertussis, and B. parapertussis reveals extensive diversity in surface structures associated with host interaction.</title>
        <authorList>
            <person name="Sebaihia M."/>
            <person name="Preston A."/>
            <person name="Maskell D.J."/>
            <person name="Kuzmiak H."/>
            <person name="Connell T.D."/>
            <person name="King N.D."/>
            <person name="Orndorff P.E."/>
            <person name="Miyamoto D.M."/>
            <person name="Thomson N.R."/>
            <person name="Harris D."/>
            <person name="Goble A."/>
            <person name="Lord A."/>
            <person name="Murphy L."/>
            <person name="Quail M.A."/>
            <person name="Rutter S."/>
            <person name="Squares R."/>
            <person name="Squares S."/>
            <person name="Woodward J."/>
            <person name="Parkhill J."/>
            <person name="Temple L.M."/>
        </authorList>
    </citation>
    <scope>NUCLEOTIDE SEQUENCE [LARGE SCALE GENOMIC DNA]</scope>
    <source>
        <strain>197N</strain>
    </source>
</reference>